<gene>
    <name type="primary">FAIM2</name>
    <name type="synonym">KIAA0950</name>
    <name type="synonym">LFG</name>
    <name type="synonym">LFG2</name>
    <name type="synonym">NMP35</name>
    <name type="synonym">TMBIM2</name>
</gene>
<dbReference type="EMBL" id="AF190461">
    <property type="protein sequence ID" value="AAF06327.1"/>
    <property type="status" value="ALT_FRAME"/>
    <property type="molecule type" value="mRNA"/>
</dbReference>
<dbReference type="EMBL" id="AB023167">
    <property type="protein sequence ID" value="BAA76794.1"/>
    <property type="status" value="ALT_INIT"/>
    <property type="molecule type" value="mRNA"/>
</dbReference>
<dbReference type="EMBL" id="AK090728">
    <property type="protein sequence ID" value="BAG52220.1"/>
    <property type="molecule type" value="mRNA"/>
</dbReference>
<dbReference type="EMBL" id="AK290031">
    <property type="protein sequence ID" value="BAF82720.1"/>
    <property type="molecule type" value="mRNA"/>
</dbReference>
<dbReference type="EMBL" id="AC131157">
    <property type="status" value="NOT_ANNOTATED_CDS"/>
    <property type="molecule type" value="Genomic_DNA"/>
</dbReference>
<dbReference type="EMBL" id="CH471111">
    <property type="protein sequence ID" value="EAW58103.1"/>
    <property type="molecule type" value="Genomic_DNA"/>
</dbReference>
<dbReference type="EMBL" id="CH471111">
    <property type="protein sequence ID" value="EAW58104.1"/>
    <property type="molecule type" value="Genomic_DNA"/>
</dbReference>
<dbReference type="EMBL" id="BC000051">
    <property type="protein sequence ID" value="AAH00051.1"/>
    <property type="molecule type" value="mRNA"/>
</dbReference>
<dbReference type="CCDS" id="CCDS8791.1">
    <molecule id="Q9BWQ8-1"/>
</dbReference>
<dbReference type="RefSeq" id="NP_036438.2">
    <molecule id="Q9BWQ8-1"/>
    <property type="nucleotide sequence ID" value="NM_012306.3"/>
</dbReference>
<dbReference type="RefSeq" id="XP_016874529.1">
    <property type="nucleotide sequence ID" value="XM_017019040.1"/>
</dbReference>
<dbReference type="RefSeq" id="XP_054227441.1">
    <molecule id="Q9BWQ8-1"/>
    <property type="nucleotide sequence ID" value="XM_054371466.1"/>
</dbReference>
<dbReference type="SMR" id="Q9BWQ8"/>
<dbReference type="BioGRID" id="116659">
    <property type="interactions" value="12"/>
</dbReference>
<dbReference type="FunCoup" id="Q9BWQ8">
    <property type="interactions" value="128"/>
</dbReference>
<dbReference type="IntAct" id="Q9BWQ8">
    <property type="interactions" value="5"/>
</dbReference>
<dbReference type="MINT" id="Q9BWQ8"/>
<dbReference type="STRING" id="9606.ENSP00000321951"/>
<dbReference type="TCDB" id="1.A.14.3.16">
    <property type="family name" value="the calcium transporter a (cata) family (formerly the testis-enhanced gene transfer (tegt) family)"/>
</dbReference>
<dbReference type="GlyCosmos" id="Q9BWQ8">
    <property type="glycosylation" value="1 site, No reported glycans"/>
</dbReference>
<dbReference type="GlyGen" id="Q9BWQ8">
    <property type="glycosylation" value="2 sites"/>
</dbReference>
<dbReference type="iPTMnet" id="Q9BWQ8"/>
<dbReference type="PhosphoSitePlus" id="Q9BWQ8"/>
<dbReference type="BioMuta" id="FAIM2"/>
<dbReference type="DMDM" id="38503167"/>
<dbReference type="MassIVE" id="Q9BWQ8"/>
<dbReference type="PaxDb" id="9606-ENSP00000321951"/>
<dbReference type="PeptideAtlas" id="Q9BWQ8"/>
<dbReference type="ProteomicsDB" id="3573"/>
<dbReference type="ProteomicsDB" id="79305">
    <molecule id="Q9BWQ8-1"/>
</dbReference>
<dbReference type="Antibodypedia" id="14095">
    <property type="antibodies" value="258 antibodies from 32 providers"/>
</dbReference>
<dbReference type="DNASU" id="23017"/>
<dbReference type="Ensembl" id="ENST00000320634.8">
    <molecule id="Q9BWQ8-1"/>
    <property type="protein sequence ID" value="ENSP00000321951.3"/>
    <property type="gene ID" value="ENSG00000135472.9"/>
</dbReference>
<dbReference type="Ensembl" id="ENST00000550890.5">
    <molecule id="Q9BWQ8-2"/>
    <property type="protein sequence ID" value="ENSP00000450132.1"/>
    <property type="gene ID" value="ENSG00000135472.9"/>
</dbReference>
<dbReference type="GeneID" id="23017"/>
<dbReference type="KEGG" id="hsa:23017"/>
<dbReference type="MANE-Select" id="ENST00000320634.8">
    <property type="protein sequence ID" value="ENSP00000321951.3"/>
    <property type="RefSeq nucleotide sequence ID" value="NM_012306.4"/>
    <property type="RefSeq protein sequence ID" value="NP_036438.2"/>
</dbReference>
<dbReference type="UCSC" id="uc001rvi.3">
    <molecule id="Q9BWQ8-1"/>
    <property type="organism name" value="human"/>
</dbReference>
<dbReference type="AGR" id="HGNC:17067"/>
<dbReference type="CTD" id="23017"/>
<dbReference type="DisGeNET" id="23017"/>
<dbReference type="GeneCards" id="FAIM2"/>
<dbReference type="HGNC" id="HGNC:17067">
    <property type="gene designation" value="FAIM2"/>
</dbReference>
<dbReference type="HPA" id="ENSG00000135472">
    <property type="expression patterns" value="Tissue enhanced (brain, parathyroid gland)"/>
</dbReference>
<dbReference type="MIM" id="604306">
    <property type="type" value="gene"/>
</dbReference>
<dbReference type="neXtProt" id="NX_Q9BWQ8"/>
<dbReference type="OpenTargets" id="ENSG00000135472"/>
<dbReference type="PharmGKB" id="PA134879081"/>
<dbReference type="VEuPathDB" id="HostDB:ENSG00000135472"/>
<dbReference type="eggNOG" id="KOG2322">
    <property type="taxonomic scope" value="Eukaryota"/>
</dbReference>
<dbReference type="GeneTree" id="ENSGT01050000244890"/>
<dbReference type="HOGENOM" id="CLU_058671_3_2_1"/>
<dbReference type="InParanoid" id="Q9BWQ8"/>
<dbReference type="OMA" id="FTGWYVY"/>
<dbReference type="OrthoDB" id="7933078at2759"/>
<dbReference type="PAN-GO" id="Q9BWQ8">
    <property type="GO annotations" value="4 GO annotations based on evolutionary models"/>
</dbReference>
<dbReference type="PhylomeDB" id="Q9BWQ8"/>
<dbReference type="TreeFam" id="TF319996"/>
<dbReference type="PathwayCommons" id="Q9BWQ8"/>
<dbReference type="SignaLink" id="Q9BWQ8"/>
<dbReference type="BioGRID-ORCS" id="23017">
    <property type="hits" value="23 hits in 1144 CRISPR screens"/>
</dbReference>
<dbReference type="ChiTaRS" id="FAIM2">
    <property type="organism name" value="human"/>
</dbReference>
<dbReference type="GenomeRNAi" id="23017"/>
<dbReference type="Pharos" id="Q9BWQ8">
    <property type="development level" value="Tbio"/>
</dbReference>
<dbReference type="PRO" id="PR:Q9BWQ8"/>
<dbReference type="Proteomes" id="UP000005640">
    <property type="component" value="Chromosome 12"/>
</dbReference>
<dbReference type="RNAct" id="Q9BWQ8">
    <property type="molecule type" value="protein"/>
</dbReference>
<dbReference type="Bgee" id="ENSG00000135472">
    <property type="expression patterns" value="Expressed in right frontal lobe and 149 other cell types or tissues"/>
</dbReference>
<dbReference type="ExpressionAtlas" id="Q9BWQ8">
    <property type="expression patterns" value="baseline and differential"/>
</dbReference>
<dbReference type="GO" id="GO:0005783">
    <property type="term" value="C:endoplasmic reticulum"/>
    <property type="evidence" value="ECO:0000318"/>
    <property type="project" value="GO_Central"/>
</dbReference>
<dbReference type="GO" id="GO:0005794">
    <property type="term" value="C:Golgi apparatus"/>
    <property type="evidence" value="ECO:0000318"/>
    <property type="project" value="GO_Central"/>
</dbReference>
<dbReference type="GO" id="GO:0000139">
    <property type="term" value="C:Golgi membrane"/>
    <property type="evidence" value="ECO:0000314"/>
    <property type="project" value="FlyBase"/>
</dbReference>
<dbReference type="GO" id="GO:0016020">
    <property type="term" value="C:membrane"/>
    <property type="evidence" value="ECO:0000318"/>
    <property type="project" value="GO_Central"/>
</dbReference>
<dbReference type="GO" id="GO:0045121">
    <property type="term" value="C:membrane raft"/>
    <property type="evidence" value="ECO:0000314"/>
    <property type="project" value="UniProtKB"/>
</dbReference>
<dbReference type="GO" id="GO:0045211">
    <property type="term" value="C:postsynaptic membrane"/>
    <property type="evidence" value="ECO:0007669"/>
    <property type="project" value="UniProtKB-SubCell"/>
</dbReference>
<dbReference type="GO" id="GO:0005262">
    <property type="term" value="F:calcium channel activity"/>
    <property type="evidence" value="ECO:0000318"/>
    <property type="project" value="GO_Central"/>
</dbReference>
<dbReference type="GO" id="GO:0097190">
    <property type="term" value="P:apoptotic signaling pathway"/>
    <property type="evidence" value="ECO:0000318"/>
    <property type="project" value="GO_Central"/>
</dbReference>
<dbReference type="GO" id="GO:0021681">
    <property type="term" value="P:cerebellar granular layer development"/>
    <property type="evidence" value="ECO:0000250"/>
    <property type="project" value="UniProtKB"/>
</dbReference>
<dbReference type="GO" id="GO:0021702">
    <property type="term" value="P:cerebellar Purkinje cell differentiation"/>
    <property type="evidence" value="ECO:0000250"/>
    <property type="project" value="UniProtKB"/>
</dbReference>
<dbReference type="GO" id="GO:0021680">
    <property type="term" value="P:cerebellar Purkinje cell layer development"/>
    <property type="evidence" value="ECO:0000250"/>
    <property type="project" value="UniProtKB"/>
</dbReference>
<dbReference type="GO" id="GO:0021549">
    <property type="term" value="P:cerebellum development"/>
    <property type="evidence" value="ECO:0000250"/>
    <property type="project" value="UniProtKB"/>
</dbReference>
<dbReference type="GO" id="GO:0043066">
    <property type="term" value="P:negative regulation of apoptotic process"/>
    <property type="evidence" value="ECO:0000303"/>
    <property type="project" value="UniProtKB"/>
</dbReference>
<dbReference type="GO" id="GO:1902042">
    <property type="term" value="P:negative regulation of extrinsic apoptotic signaling pathway via death domain receptors"/>
    <property type="evidence" value="ECO:0000314"/>
    <property type="project" value="MGI"/>
</dbReference>
<dbReference type="GO" id="GO:0043524">
    <property type="term" value="P:negative regulation of neuron apoptotic process"/>
    <property type="evidence" value="ECO:0000318"/>
    <property type="project" value="GO_Central"/>
</dbReference>
<dbReference type="GO" id="GO:0051402">
    <property type="term" value="P:neuron apoptotic process"/>
    <property type="evidence" value="ECO:0007669"/>
    <property type="project" value="Ensembl"/>
</dbReference>
<dbReference type="GO" id="GO:0043523">
    <property type="term" value="P:regulation of neuron apoptotic process"/>
    <property type="evidence" value="ECO:0000315"/>
    <property type="project" value="UniProtKB"/>
</dbReference>
<dbReference type="GO" id="GO:0002931">
    <property type="term" value="P:response to ischemia"/>
    <property type="evidence" value="ECO:0007669"/>
    <property type="project" value="Ensembl"/>
</dbReference>
<dbReference type="CDD" id="cd10428">
    <property type="entry name" value="LFG_like"/>
    <property type="match status" value="1"/>
</dbReference>
<dbReference type="InterPro" id="IPR006214">
    <property type="entry name" value="Bax_inhibitor_1-related"/>
</dbReference>
<dbReference type="PANTHER" id="PTHR23291">
    <property type="entry name" value="BAX INHIBITOR-RELATED"/>
    <property type="match status" value="1"/>
</dbReference>
<dbReference type="PANTHER" id="PTHR23291:SF18">
    <property type="entry name" value="PROTEIN LIFEGUARD 2"/>
    <property type="match status" value="1"/>
</dbReference>
<dbReference type="Pfam" id="PF01027">
    <property type="entry name" value="Bax1-I"/>
    <property type="match status" value="1"/>
</dbReference>
<comment type="function">
    <text evidence="4 6">Antiapoptotic protein which protects cells uniquely from Fas-induced apoptosis. Regulates Fas-mediated apoptosis in neurons by interfering with caspase-8 activation. May play a role in cerebellar development by affecting cerebellar size, internal granular layer (IGL) thickness, and Purkinje cell (PC) development.</text>
</comment>
<comment type="subunit">
    <text evidence="4 5">Interacts with FAS/TNFRSF6 and BAX.</text>
</comment>
<comment type="interaction">
    <interactant intactId="EBI-9056723">
        <id>Q9BWQ8</id>
    </interactant>
    <interactant intactId="EBI-12135243">
        <id>O95208-2</id>
        <label>EPN2</label>
    </interactant>
    <organismsDiffer>false</organismsDiffer>
    <experiments>3</experiments>
</comment>
<comment type="interaction">
    <interactant intactId="EBI-9056723">
        <id>Q9BWQ8</id>
    </interactant>
    <interactant intactId="EBI-2868927">
        <id>Q6P531</id>
        <label>GGT6</label>
    </interactant>
    <organismsDiffer>false</organismsDiffer>
    <experiments>3</experiments>
</comment>
<comment type="subcellular location">
    <subcellularLocation>
        <location evidence="1">Cell membrane</location>
        <topology evidence="1">Multi-pass membrane protein</topology>
    </subcellularLocation>
    <subcellularLocation>
        <location evidence="6">Membrane raft</location>
    </subcellularLocation>
    <subcellularLocation>
        <location evidence="1">Postsynaptic cell membrane</location>
    </subcellularLocation>
</comment>
<comment type="alternative products">
    <event type="alternative splicing"/>
    <isoform>
        <id>Q9BWQ8-1</id>
        <name>1</name>
        <sequence type="displayed"/>
    </isoform>
    <isoform>
        <id>Q9BWQ8-2</id>
        <name>2</name>
        <sequence type="described" ref="VSP_056989"/>
    </isoform>
</comment>
<comment type="tissue specificity">
    <text evidence="4 8">Highly expressed in breast carcinoma tissues. Enhanced expression correlates with the grade of the tumor (grade II/grade III) in primary breast tumors (at protein level). Widely expressed. Expressed at high levels in the brain especially in the hippocampus.</text>
</comment>
<comment type="induction">
    <text evidence="7">Regulated by the AKT1/LEF1 pathway in breast cancer cell lines.</text>
</comment>
<comment type="similarity">
    <text evidence="10">Belongs to the BI1 family. LFG subfamily.</text>
</comment>
<comment type="sequence caution" evidence="10">
    <conflict type="frameshift">
        <sequence resource="EMBL-CDS" id="AAF06327"/>
    </conflict>
</comment>
<comment type="sequence caution" evidence="10">
    <conflict type="erroneous initiation">
        <sequence resource="EMBL-CDS" id="BAA76794"/>
    </conflict>
    <text>Extended N-terminus.</text>
</comment>
<reference key="1">
    <citation type="journal article" date="1999" name="Proc. Natl. Acad. Sci. U.S.A.">
        <title>LFG: an anti-apoptotic gene that provides protection from fas-mediated cell death.</title>
        <authorList>
            <person name="Somia N.V."/>
            <person name="Schmitt M.J."/>
            <person name="Vetter D.E."/>
            <person name="Van Antwerp D."/>
            <person name="Heinemann S.F."/>
            <person name="Verma I.M."/>
        </authorList>
    </citation>
    <scope>NUCLEOTIDE SEQUENCE [MRNA] (ISOFORM 1)</scope>
    <scope>FUNCTION</scope>
    <scope>INTERACTION WITH FAS/TNFRSF6</scope>
    <scope>TISSUE SPECIFICITY</scope>
    <source>
        <tissue>Lung fibroblast</tissue>
    </source>
</reference>
<reference key="2">
    <citation type="journal article" date="1999" name="DNA Res.">
        <title>Prediction of the coding sequences of unidentified human genes. XIII. The complete sequences of 100 new cDNA clones from brain which code for large proteins in vitro.</title>
        <authorList>
            <person name="Nagase T."/>
            <person name="Ishikawa K."/>
            <person name="Suyama M."/>
            <person name="Kikuno R."/>
            <person name="Hirosawa M."/>
            <person name="Miyajima N."/>
            <person name="Tanaka A."/>
            <person name="Kotani H."/>
            <person name="Nomura N."/>
            <person name="Ohara O."/>
        </authorList>
    </citation>
    <scope>NUCLEOTIDE SEQUENCE [LARGE SCALE MRNA] (ISOFORM 1)</scope>
    <source>
        <tissue>Brain</tissue>
    </source>
</reference>
<reference key="3">
    <citation type="journal article" date="2004" name="Nat. Genet.">
        <title>Complete sequencing and characterization of 21,243 full-length human cDNAs.</title>
        <authorList>
            <person name="Ota T."/>
            <person name="Suzuki Y."/>
            <person name="Nishikawa T."/>
            <person name="Otsuki T."/>
            <person name="Sugiyama T."/>
            <person name="Irie R."/>
            <person name="Wakamatsu A."/>
            <person name="Hayashi K."/>
            <person name="Sato H."/>
            <person name="Nagai K."/>
            <person name="Kimura K."/>
            <person name="Makita H."/>
            <person name="Sekine M."/>
            <person name="Obayashi M."/>
            <person name="Nishi T."/>
            <person name="Shibahara T."/>
            <person name="Tanaka T."/>
            <person name="Ishii S."/>
            <person name="Yamamoto J."/>
            <person name="Saito K."/>
            <person name="Kawai Y."/>
            <person name="Isono Y."/>
            <person name="Nakamura Y."/>
            <person name="Nagahari K."/>
            <person name="Murakami K."/>
            <person name="Yasuda T."/>
            <person name="Iwayanagi T."/>
            <person name="Wagatsuma M."/>
            <person name="Shiratori A."/>
            <person name="Sudo H."/>
            <person name="Hosoiri T."/>
            <person name="Kaku Y."/>
            <person name="Kodaira H."/>
            <person name="Kondo H."/>
            <person name="Sugawara M."/>
            <person name="Takahashi M."/>
            <person name="Kanda K."/>
            <person name="Yokoi T."/>
            <person name="Furuya T."/>
            <person name="Kikkawa E."/>
            <person name="Omura Y."/>
            <person name="Abe K."/>
            <person name="Kamihara K."/>
            <person name="Katsuta N."/>
            <person name="Sato K."/>
            <person name="Tanikawa M."/>
            <person name="Yamazaki M."/>
            <person name="Ninomiya K."/>
            <person name="Ishibashi T."/>
            <person name="Yamashita H."/>
            <person name="Murakawa K."/>
            <person name="Fujimori K."/>
            <person name="Tanai H."/>
            <person name="Kimata M."/>
            <person name="Watanabe M."/>
            <person name="Hiraoka S."/>
            <person name="Chiba Y."/>
            <person name="Ishida S."/>
            <person name="Ono Y."/>
            <person name="Takiguchi S."/>
            <person name="Watanabe S."/>
            <person name="Yosida M."/>
            <person name="Hotuta T."/>
            <person name="Kusano J."/>
            <person name="Kanehori K."/>
            <person name="Takahashi-Fujii A."/>
            <person name="Hara H."/>
            <person name="Tanase T.-O."/>
            <person name="Nomura Y."/>
            <person name="Togiya S."/>
            <person name="Komai F."/>
            <person name="Hara R."/>
            <person name="Takeuchi K."/>
            <person name="Arita M."/>
            <person name="Imose N."/>
            <person name="Musashino K."/>
            <person name="Yuuki H."/>
            <person name="Oshima A."/>
            <person name="Sasaki N."/>
            <person name="Aotsuka S."/>
            <person name="Yoshikawa Y."/>
            <person name="Matsunawa H."/>
            <person name="Ichihara T."/>
            <person name="Shiohata N."/>
            <person name="Sano S."/>
            <person name="Moriya S."/>
            <person name="Momiyama H."/>
            <person name="Satoh N."/>
            <person name="Takami S."/>
            <person name="Terashima Y."/>
            <person name="Suzuki O."/>
            <person name="Nakagawa S."/>
            <person name="Senoh A."/>
            <person name="Mizoguchi H."/>
            <person name="Goto Y."/>
            <person name="Shimizu F."/>
            <person name="Wakebe H."/>
            <person name="Hishigaki H."/>
            <person name="Watanabe T."/>
            <person name="Sugiyama A."/>
            <person name="Takemoto M."/>
            <person name="Kawakami B."/>
            <person name="Yamazaki M."/>
            <person name="Watanabe K."/>
            <person name="Kumagai A."/>
            <person name="Itakura S."/>
            <person name="Fukuzumi Y."/>
            <person name="Fujimori Y."/>
            <person name="Komiyama M."/>
            <person name="Tashiro H."/>
            <person name="Tanigami A."/>
            <person name="Fujiwara T."/>
            <person name="Ono T."/>
            <person name="Yamada K."/>
            <person name="Fujii Y."/>
            <person name="Ozaki K."/>
            <person name="Hirao M."/>
            <person name="Ohmori Y."/>
            <person name="Kawabata A."/>
            <person name="Hikiji T."/>
            <person name="Kobatake N."/>
            <person name="Inagaki H."/>
            <person name="Ikema Y."/>
            <person name="Okamoto S."/>
            <person name="Okitani R."/>
            <person name="Kawakami T."/>
            <person name="Noguchi S."/>
            <person name="Itoh T."/>
            <person name="Shigeta K."/>
            <person name="Senba T."/>
            <person name="Matsumura K."/>
            <person name="Nakajima Y."/>
            <person name="Mizuno T."/>
            <person name="Morinaga M."/>
            <person name="Sasaki M."/>
            <person name="Togashi T."/>
            <person name="Oyama M."/>
            <person name="Hata H."/>
            <person name="Watanabe M."/>
            <person name="Komatsu T."/>
            <person name="Mizushima-Sugano J."/>
            <person name="Satoh T."/>
            <person name="Shirai Y."/>
            <person name="Takahashi Y."/>
            <person name="Nakagawa K."/>
            <person name="Okumura K."/>
            <person name="Nagase T."/>
            <person name="Nomura N."/>
            <person name="Kikuchi H."/>
            <person name="Masuho Y."/>
            <person name="Yamashita R."/>
            <person name="Nakai K."/>
            <person name="Yada T."/>
            <person name="Nakamura Y."/>
            <person name="Ohara O."/>
            <person name="Isogai T."/>
            <person name="Sugano S."/>
        </authorList>
    </citation>
    <scope>NUCLEOTIDE SEQUENCE [LARGE SCALE MRNA] (ISOFORMS 1 AND 2)</scope>
    <source>
        <tissue>Cerebellum</tissue>
        <tissue>Hippocampus</tissue>
    </source>
</reference>
<reference key="4">
    <citation type="journal article" date="2006" name="Nature">
        <title>The finished DNA sequence of human chromosome 12.</title>
        <authorList>
            <person name="Scherer S.E."/>
            <person name="Muzny D.M."/>
            <person name="Buhay C.J."/>
            <person name="Chen R."/>
            <person name="Cree A."/>
            <person name="Ding Y."/>
            <person name="Dugan-Rocha S."/>
            <person name="Gill R."/>
            <person name="Gunaratne P."/>
            <person name="Harris R.A."/>
            <person name="Hawes A.C."/>
            <person name="Hernandez J."/>
            <person name="Hodgson A.V."/>
            <person name="Hume J."/>
            <person name="Jackson A."/>
            <person name="Khan Z.M."/>
            <person name="Kovar-Smith C."/>
            <person name="Lewis L.R."/>
            <person name="Lozado R.J."/>
            <person name="Metzker M.L."/>
            <person name="Milosavljevic A."/>
            <person name="Miner G.R."/>
            <person name="Montgomery K.T."/>
            <person name="Morgan M.B."/>
            <person name="Nazareth L.V."/>
            <person name="Scott G."/>
            <person name="Sodergren E."/>
            <person name="Song X.-Z."/>
            <person name="Steffen D."/>
            <person name="Lovering R.C."/>
            <person name="Wheeler D.A."/>
            <person name="Worley K.C."/>
            <person name="Yuan Y."/>
            <person name="Zhang Z."/>
            <person name="Adams C.Q."/>
            <person name="Ansari-Lari M.A."/>
            <person name="Ayele M."/>
            <person name="Brown M.J."/>
            <person name="Chen G."/>
            <person name="Chen Z."/>
            <person name="Clerc-Blankenburg K.P."/>
            <person name="Davis C."/>
            <person name="Delgado O."/>
            <person name="Dinh H.H."/>
            <person name="Draper H."/>
            <person name="Gonzalez-Garay M.L."/>
            <person name="Havlak P."/>
            <person name="Jackson L.R."/>
            <person name="Jacob L.S."/>
            <person name="Kelly S.H."/>
            <person name="Li L."/>
            <person name="Li Z."/>
            <person name="Liu J."/>
            <person name="Liu W."/>
            <person name="Lu J."/>
            <person name="Maheshwari M."/>
            <person name="Nguyen B.-V."/>
            <person name="Okwuonu G.O."/>
            <person name="Pasternak S."/>
            <person name="Perez L.M."/>
            <person name="Plopper F.J.H."/>
            <person name="Santibanez J."/>
            <person name="Shen H."/>
            <person name="Tabor P.E."/>
            <person name="Verduzco D."/>
            <person name="Waldron L."/>
            <person name="Wang Q."/>
            <person name="Williams G.A."/>
            <person name="Zhang J."/>
            <person name="Zhou J."/>
            <person name="Allen C.C."/>
            <person name="Amin A.G."/>
            <person name="Anyalebechi V."/>
            <person name="Bailey M."/>
            <person name="Barbaria J.A."/>
            <person name="Bimage K.E."/>
            <person name="Bryant N.P."/>
            <person name="Burch P.E."/>
            <person name="Burkett C.E."/>
            <person name="Burrell K.L."/>
            <person name="Calderon E."/>
            <person name="Cardenas V."/>
            <person name="Carter K."/>
            <person name="Casias K."/>
            <person name="Cavazos I."/>
            <person name="Cavazos S.R."/>
            <person name="Ceasar H."/>
            <person name="Chacko J."/>
            <person name="Chan S.N."/>
            <person name="Chavez D."/>
            <person name="Christopoulos C."/>
            <person name="Chu J."/>
            <person name="Cockrell R."/>
            <person name="Cox C.D."/>
            <person name="Dang M."/>
            <person name="Dathorne S.R."/>
            <person name="David R."/>
            <person name="Davis C.M."/>
            <person name="Davy-Carroll L."/>
            <person name="Deshazo D.R."/>
            <person name="Donlin J.E."/>
            <person name="D'Souza L."/>
            <person name="Eaves K.A."/>
            <person name="Egan A."/>
            <person name="Emery-Cohen A.J."/>
            <person name="Escotto M."/>
            <person name="Flagg N."/>
            <person name="Forbes L.D."/>
            <person name="Gabisi A.M."/>
            <person name="Garza M."/>
            <person name="Hamilton C."/>
            <person name="Henderson N."/>
            <person name="Hernandez O."/>
            <person name="Hines S."/>
            <person name="Hogues M.E."/>
            <person name="Huang M."/>
            <person name="Idlebird D.G."/>
            <person name="Johnson R."/>
            <person name="Jolivet A."/>
            <person name="Jones S."/>
            <person name="Kagan R."/>
            <person name="King L.M."/>
            <person name="Leal B."/>
            <person name="Lebow H."/>
            <person name="Lee S."/>
            <person name="LeVan J.M."/>
            <person name="Lewis L.C."/>
            <person name="London P."/>
            <person name="Lorensuhewa L.M."/>
            <person name="Loulseged H."/>
            <person name="Lovett D.A."/>
            <person name="Lucier A."/>
            <person name="Lucier R.L."/>
            <person name="Ma J."/>
            <person name="Madu R.C."/>
            <person name="Mapua P."/>
            <person name="Martindale A.D."/>
            <person name="Martinez E."/>
            <person name="Massey E."/>
            <person name="Mawhiney S."/>
            <person name="Meador M.G."/>
            <person name="Mendez S."/>
            <person name="Mercado C."/>
            <person name="Mercado I.C."/>
            <person name="Merritt C.E."/>
            <person name="Miner Z.L."/>
            <person name="Minja E."/>
            <person name="Mitchell T."/>
            <person name="Mohabbat F."/>
            <person name="Mohabbat K."/>
            <person name="Montgomery B."/>
            <person name="Moore N."/>
            <person name="Morris S."/>
            <person name="Munidasa M."/>
            <person name="Ngo R.N."/>
            <person name="Nguyen N.B."/>
            <person name="Nickerson E."/>
            <person name="Nwaokelemeh O.O."/>
            <person name="Nwokenkwo S."/>
            <person name="Obregon M."/>
            <person name="Oguh M."/>
            <person name="Oragunye N."/>
            <person name="Oviedo R.J."/>
            <person name="Parish B.J."/>
            <person name="Parker D.N."/>
            <person name="Parrish J."/>
            <person name="Parks K.L."/>
            <person name="Paul H.A."/>
            <person name="Payton B.A."/>
            <person name="Perez A."/>
            <person name="Perrin W."/>
            <person name="Pickens A."/>
            <person name="Primus E.L."/>
            <person name="Pu L.-L."/>
            <person name="Puazo M."/>
            <person name="Quiles M.M."/>
            <person name="Quiroz J.B."/>
            <person name="Rabata D."/>
            <person name="Reeves K."/>
            <person name="Ruiz S.J."/>
            <person name="Shao H."/>
            <person name="Sisson I."/>
            <person name="Sonaike T."/>
            <person name="Sorelle R.P."/>
            <person name="Sutton A.E."/>
            <person name="Svatek A.F."/>
            <person name="Svetz L.A."/>
            <person name="Tamerisa K.S."/>
            <person name="Taylor T.R."/>
            <person name="Teague B."/>
            <person name="Thomas N."/>
            <person name="Thorn R.D."/>
            <person name="Trejos Z.Y."/>
            <person name="Trevino B.K."/>
            <person name="Ukegbu O.N."/>
            <person name="Urban J.B."/>
            <person name="Vasquez L.I."/>
            <person name="Vera V.A."/>
            <person name="Villasana D.M."/>
            <person name="Wang L."/>
            <person name="Ward-Moore S."/>
            <person name="Warren J.T."/>
            <person name="Wei X."/>
            <person name="White F."/>
            <person name="Williamson A.L."/>
            <person name="Wleczyk R."/>
            <person name="Wooden H.S."/>
            <person name="Wooden S.H."/>
            <person name="Yen J."/>
            <person name="Yoon L."/>
            <person name="Yoon V."/>
            <person name="Zorrilla S.E."/>
            <person name="Nelson D."/>
            <person name="Kucherlapati R."/>
            <person name="Weinstock G."/>
            <person name="Gibbs R.A."/>
        </authorList>
    </citation>
    <scope>NUCLEOTIDE SEQUENCE [LARGE SCALE GENOMIC DNA]</scope>
</reference>
<reference key="5">
    <citation type="submission" date="2005-07" db="EMBL/GenBank/DDBJ databases">
        <authorList>
            <person name="Mural R.J."/>
            <person name="Istrail S."/>
            <person name="Sutton G.G."/>
            <person name="Florea L."/>
            <person name="Halpern A.L."/>
            <person name="Mobarry C.M."/>
            <person name="Lippert R."/>
            <person name="Walenz B."/>
            <person name="Shatkay H."/>
            <person name="Dew I."/>
            <person name="Miller J.R."/>
            <person name="Flanigan M.J."/>
            <person name="Edwards N.J."/>
            <person name="Bolanos R."/>
            <person name="Fasulo D."/>
            <person name="Halldorsson B.V."/>
            <person name="Hannenhalli S."/>
            <person name="Turner R."/>
            <person name="Yooseph S."/>
            <person name="Lu F."/>
            <person name="Nusskern D.R."/>
            <person name="Shue B.C."/>
            <person name="Zheng X.H."/>
            <person name="Zhong F."/>
            <person name="Delcher A.L."/>
            <person name="Huson D.H."/>
            <person name="Kravitz S.A."/>
            <person name="Mouchard L."/>
            <person name="Reinert K."/>
            <person name="Remington K.A."/>
            <person name="Clark A.G."/>
            <person name="Waterman M.S."/>
            <person name="Eichler E.E."/>
            <person name="Adams M.D."/>
            <person name="Hunkapiller M.W."/>
            <person name="Myers E.W."/>
            <person name="Venter J.C."/>
        </authorList>
    </citation>
    <scope>NUCLEOTIDE SEQUENCE [LARGE SCALE GENOMIC DNA]</scope>
</reference>
<reference key="6">
    <citation type="journal article" date="2004" name="Genome Res.">
        <title>The status, quality, and expansion of the NIH full-length cDNA project: the Mammalian Gene Collection (MGC).</title>
        <authorList>
            <consortium name="The MGC Project Team"/>
        </authorList>
    </citation>
    <scope>NUCLEOTIDE SEQUENCE [LARGE SCALE MRNA] (ISOFORM 1)</scope>
    <source>
        <tissue>Brain</tissue>
    </source>
</reference>
<reference key="7">
    <citation type="journal article" date="2006" name="Int. J. Mol. Med.">
        <title>Sequence analysis shows that Lifeguard belongs to a new evolutionarily conserved cytoprotective family.</title>
        <authorList>
            <person name="Reimers K."/>
            <person name="Choi C.Y."/>
            <person name="Mau-Thek E."/>
            <person name="Vogt P.M."/>
        </authorList>
    </citation>
    <scope>GENE FAMILY</scope>
    <scope>INTERACTION WITH BAX</scope>
</reference>
<reference key="8">
    <citation type="journal article" date="2007" name="J. Neurochem.">
        <title>Lifeguard/neuronal membrane protein 35 regulates Fas ligand-mediated apoptosis in neurons via microdomain recruitment.</title>
        <authorList>
            <person name="Fernandez M."/>
            <person name="Segura M.F."/>
            <person name="Sole C."/>
            <person name="Colino A."/>
            <person name="Comella J.X."/>
            <person name="Cena V."/>
        </authorList>
    </citation>
    <scope>FUNCTION</scope>
    <scope>SUBCELLULAR LOCATION</scope>
</reference>
<reference key="9">
    <citation type="journal article" date="2009" name="Apoptosis">
        <title>LFG: a candidate apoptosis regulatory gene family.</title>
        <authorList>
            <person name="Hu L."/>
            <person name="Smith T.F."/>
            <person name="Goldberger G."/>
        </authorList>
    </citation>
    <scope>GENE FAMILY</scope>
    <scope>NOMENCLATURE</scope>
</reference>
<reference key="10">
    <citation type="journal article" date="2010" name="Apoptosis">
        <title>Transactivation of lifeguard (LFG) by Akt-/LEF-1 pathway in MCF-7 and MDA-MB 231 human breast cancer cells.</title>
        <authorList>
            <person name="Bucan V."/>
            <person name="Adili M.Y."/>
            <person name="Choi C.Y."/>
            <person name="Eddy M.T."/>
            <person name="Vogt P.M."/>
            <person name="Reimers K."/>
        </authorList>
    </citation>
    <scope>INDUCTION</scope>
</reference>
<reference key="11">
    <citation type="journal article" date="2010" name="Cell. Mol. Biol. Lett.">
        <title>The anti-apoptotic protein lifeguard is expressed in breast cancer cells and tissues.</title>
        <authorList>
            <person name="Bucan V."/>
            <person name="Reimers K."/>
            <person name="Choi C.Y."/>
            <person name="Eddy M.T."/>
            <person name="Vogt P.M."/>
        </authorList>
    </citation>
    <scope>TISSUE SPECIFICITY</scope>
</reference>
<evidence type="ECO:0000250" key="1"/>
<evidence type="ECO:0000255" key="2"/>
<evidence type="ECO:0000256" key="3">
    <source>
        <dbReference type="SAM" id="MobiDB-lite"/>
    </source>
</evidence>
<evidence type="ECO:0000269" key="4">
    <source>
    </source>
</evidence>
<evidence type="ECO:0000269" key="5">
    <source>
    </source>
</evidence>
<evidence type="ECO:0000269" key="6">
    <source>
    </source>
</evidence>
<evidence type="ECO:0000269" key="7">
    <source>
    </source>
</evidence>
<evidence type="ECO:0000269" key="8">
    <source>
    </source>
</evidence>
<evidence type="ECO:0000303" key="9">
    <source>
    </source>
</evidence>
<evidence type="ECO:0000305" key="10"/>
<proteinExistence type="evidence at protein level"/>
<name>LFG2_HUMAN</name>
<keyword id="KW-0025">Alternative splicing</keyword>
<keyword id="KW-0053">Apoptosis</keyword>
<keyword id="KW-1003">Cell membrane</keyword>
<keyword id="KW-0325">Glycoprotein</keyword>
<keyword id="KW-0472">Membrane</keyword>
<keyword id="KW-0628">Postsynaptic cell membrane</keyword>
<keyword id="KW-1267">Proteomics identification</keyword>
<keyword id="KW-1185">Reference proteome</keyword>
<keyword id="KW-0770">Synapse</keyword>
<keyword id="KW-0812">Transmembrane</keyword>
<keyword id="KW-1133">Transmembrane helix</keyword>
<sequence>MTQGKLSVANKAPGTEGQQQVHGEKKEAPAVPSAPPSYEEATSGEGMKAGAFPPAPTAVPLHPSWAYVDPSSSSSYDNGFPTGDHELFTTFSWDDQKVRRVFVRKVYTILLIQLLVTLAVVALFTFCDPVKDYVQANPGWYWASYAVFFATYLTLACCSGPRRHFPWNLILLTVFTLSMAYLTGMLSSYYNTTSVLLCLGITALVCLSVTVFSFQTKFDFTSCQGVLFVLLMTLFFSGLILAILLPFQYVPWLHAVYAALGAGVFTLFLALDTQLLMGNRRHSLSPEEYIFGALNIYLDIIYIFTFFLQLFGTNRE</sequence>
<organism>
    <name type="scientific">Homo sapiens</name>
    <name type="common">Human</name>
    <dbReference type="NCBI Taxonomy" id="9606"/>
    <lineage>
        <taxon>Eukaryota</taxon>
        <taxon>Metazoa</taxon>
        <taxon>Chordata</taxon>
        <taxon>Craniata</taxon>
        <taxon>Vertebrata</taxon>
        <taxon>Euteleostomi</taxon>
        <taxon>Mammalia</taxon>
        <taxon>Eutheria</taxon>
        <taxon>Euarchontoglires</taxon>
        <taxon>Primates</taxon>
        <taxon>Haplorrhini</taxon>
        <taxon>Catarrhini</taxon>
        <taxon>Hominidae</taxon>
        <taxon>Homo</taxon>
    </lineage>
</organism>
<feature type="chain" id="PRO_0000179087" description="Protein lifeguard 2">
    <location>
        <begin position="1"/>
        <end position="316"/>
    </location>
</feature>
<feature type="transmembrane region" description="Helical" evidence="2">
    <location>
        <begin position="106"/>
        <end position="126"/>
    </location>
</feature>
<feature type="transmembrane region" description="Helical" evidence="2">
    <location>
        <begin position="138"/>
        <end position="158"/>
    </location>
</feature>
<feature type="transmembrane region" description="Helical" evidence="2">
    <location>
        <begin position="165"/>
        <end position="185"/>
    </location>
</feature>
<feature type="transmembrane region" description="Helical" evidence="2">
    <location>
        <begin position="194"/>
        <end position="214"/>
    </location>
</feature>
<feature type="transmembrane region" description="Helical" evidence="2">
    <location>
        <begin position="225"/>
        <end position="245"/>
    </location>
</feature>
<feature type="transmembrane region" description="Helical" evidence="2">
    <location>
        <begin position="250"/>
        <end position="270"/>
    </location>
</feature>
<feature type="transmembrane region" description="Helical" evidence="2">
    <location>
        <begin position="290"/>
        <end position="310"/>
    </location>
</feature>
<feature type="region of interest" description="Disordered" evidence="3">
    <location>
        <begin position="1"/>
        <end position="53"/>
    </location>
</feature>
<feature type="glycosylation site" description="N-linked (GlcNAc...) asparagine" evidence="2">
    <location>
        <position position="191"/>
    </location>
</feature>
<feature type="splice variant" id="VSP_056989" description="In isoform 2." evidence="9">
    <location>
        <begin position="1"/>
        <end position="46"/>
    </location>
</feature>
<feature type="sequence conflict" description="In Ref. 1; AAF06327." evidence="10" ref="1">
    <original>Q</original>
    <variation>R</variation>
    <location>
        <position position="3"/>
    </location>
</feature>
<accession>Q9BWQ8</accession>
<accession>A8K1W6</accession>
<accession>B3KR08</accession>
<accession>Q9UJY9</accession>
<accession>Q9Y2F7</accession>
<protein>
    <recommendedName>
        <fullName>Protein lifeguard 2</fullName>
    </recommendedName>
    <alternativeName>
        <fullName>Fas apoptotic inhibitory molecule 2</fullName>
    </alternativeName>
    <alternativeName>
        <fullName>Neural membrane protein 35</fullName>
    </alternativeName>
    <alternativeName>
        <fullName>Transmembrane BAX inhibitor motif-containing protein 2</fullName>
    </alternativeName>
</protein>